<organism>
    <name type="scientific">Lacticaseibacillus casei (strain BL23)</name>
    <name type="common">Lactobacillus casei</name>
    <dbReference type="NCBI Taxonomy" id="543734"/>
    <lineage>
        <taxon>Bacteria</taxon>
        <taxon>Bacillati</taxon>
        <taxon>Bacillota</taxon>
        <taxon>Bacilli</taxon>
        <taxon>Lactobacillales</taxon>
        <taxon>Lactobacillaceae</taxon>
        <taxon>Lacticaseibacillus</taxon>
    </lineage>
</organism>
<accession>B3WEX2</accession>
<reference key="1">
    <citation type="submission" date="2008-06" db="EMBL/GenBank/DDBJ databases">
        <title>Lactobacillus casei BL23 complete genome sequence.</title>
        <authorList>
            <person name="Maze A."/>
            <person name="Boel G."/>
            <person name="Bourand A."/>
            <person name="Loux V."/>
            <person name="Gibrat J.F."/>
            <person name="Zuniga M."/>
            <person name="Hartke A."/>
            <person name="Deutscher J."/>
        </authorList>
    </citation>
    <scope>NUCLEOTIDE SEQUENCE [LARGE SCALE GENOMIC DNA]</scope>
    <source>
        <strain>BL23</strain>
    </source>
</reference>
<protein>
    <recommendedName>
        <fullName evidence="1">DNA-directed RNA polymerase subunit omega</fullName>
        <shortName evidence="1">RNAP omega subunit</shortName>
        <ecNumber evidence="1">2.7.7.6</ecNumber>
    </recommendedName>
    <alternativeName>
        <fullName evidence="1">RNA polymerase omega subunit</fullName>
    </alternativeName>
    <alternativeName>
        <fullName evidence="1">Transcriptase subunit omega</fullName>
    </alternativeName>
</protein>
<feature type="chain" id="PRO_1000121237" description="DNA-directed RNA polymerase subunit omega">
    <location>
        <begin position="1"/>
        <end position="82"/>
    </location>
</feature>
<gene>
    <name evidence="1" type="primary">rpoZ</name>
    <name type="ordered locus">LCABL_18430</name>
</gene>
<sequence length="82" mass="9205">MIIYPSIDKLLEKVPSRYSLAVLAAKRAHELESGDLKMLSDYKSDKSVGKALEEIAAGDVIIDPKSKMLERDAEKLDRKDQE</sequence>
<comment type="function">
    <text evidence="1">Promotes RNA polymerase assembly. Latches the N- and C-terminal regions of the beta' subunit thereby facilitating its interaction with the beta and alpha subunits.</text>
</comment>
<comment type="catalytic activity">
    <reaction evidence="1">
        <text>RNA(n) + a ribonucleoside 5'-triphosphate = RNA(n+1) + diphosphate</text>
        <dbReference type="Rhea" id="RHEA:21248"/>
        <dbReference type="Rhea" id="RHEA-COMP:14527"/>
        <dbReference type="Rhea" id="RHEA-COMP:17342"/>
        <dbReference type="ChEBI" id="CHEBI:33019"/>
        <dbReference type="ChEBI" id="CHEBI:61557"/>
        <dbReference type="ChEBI" id="CHEBI:140395"/>
        <dbReference type="EC" id="2.7.7.6"/>
    </reaction>
</comment>
<comment type="subunit">
    <text evidence="1">The RNAP catalytic core consists of 2 alpha, 1 beta, 1 beta' and 1 omega subunit. When a sigma factor is associated with the core the holoenzyme is formed, which can initiate transcription.</text>
</comment>
<comment type="similarity">
    <text evidence="1">Belongs to the RNA polymerase subunit omega family.</text>
</comment>
<dbReference type="EC" id="2.7.7.6" evidence="1"/>
<dbReference type="EMBL" id="FM177140">
    <property type="protein sequence ID" value="CAQ66923.1"/>
    <property type="molecule type" value="Genomic_DNA"/>
</dbReference>
<dbReference type="SMR" id="B3WEX2"/>
<dbReference type="KEGG" id="lcb:LCABL_18430"/>
<dbReference type="HOGENOM" id="CLU_125406_0_0_9"/>
<dbReference type="GO" id="GO:0000428">
    <property type="term" value="C:DNA-directed RNA polymerase complex"/>
    <property type="evidence" value="ECO:0007669"/>
    <property type="project" value="UniProtKB-KW"/>
</dbReference>
<dbReference type="GO" id="GO:0003677">
    <property type="term" value="F:DNA binding"/>
    <property type="evidence" value="ECO:0007669"/>
    <property type="project" value="UniProtKB-UniRule"/>
</dbReference>
<dbReference type="GO" id="GO:0003899">
    <property type="term" value="F:DNA-directed RNA polymerase activity"/>
    <property type="evidence" value="ECO:0007669"/>
    <property type="project" value="UniProtKB-UniRule"/>
</dbReference>
<dbReference type="GO" id="GO:0006351">
    <property type="term" value="P:DNA-templated transcription"/>
    <property type="evidence" value="ECO:0007669"/>
    <property type="project" value="UniProtKB-UniRule"/>
</dbReference>
<dbReference type="Gene3D" id="3.90.940.10">
    <property type="match status" value="1"/>
</dbReference>
<dbReference type="HAMAP" id="MF_00366">
    <property type="entry name" value="RNApol_bact_RpoZ"/>
    <property type="match status" value="1"/>
</dbReference>
<dbReference type="InterPro" id="IPR003716">
    <property type="entry name" value="DNA-dir_RNA_pol_omega"/>
</dbReference>
<dbReference type="InterPro" id="IPR006110">
    <property type="entry name" value="Pol_omega/Rpo6/RPB6"/>
</dbReference>
<dbReference type="InterPro" id="IPR036161">
    <property type="entry name" value="RPB6/omega-like_sf"/>
</dbReference>
<dbReference type="NCBIfam" id="TIGR00690">
    <property type="entry name" value="rpoZ"/>
    <property type="match status" value="1"/>
</dbReference>
<dbReference type="PANTHER" id="PTHR34476">
    <property type="entry name" value="DNA-DIRECTED RNA POLYMERASE SUBUNIT OMEGA"/>
    <property type="match status" value="1"/>
</dbReference>
<dbReference type="PANTHER" id="PTHR34476:SF1">
    <property type="entry name" value="DNA-DIRECTED RNA POLYMERASE SUBUNIT OMEGA"/>
    <property type="match status" value="1"/>
</dbReference>
<dbReference type="Pfam" id="PF01192">
    <property type="entry name" value="RNA_pol_Rpb6"/>
    <property type="match status" value="1"/>
</dbReference>
<dbReference type="SMART" id="SM01409">
    <property type="entry name" value="RNA_pol_Rpb6"/>
    <property type="match status" value="1"/>
</dbReference>
<dbReference type="SUPFAM" id="SSF63562">
    <property type="entry name" value="RPB6/omega subunit-like"/>
    <property type="match status" value="1"/>
</dbReference>
<keyword id="KW-0240">DNA-directed RNA polymerase</keyword>
<keyword id="KW-0548">Nucleotidyltransferase</keyword>
<keyword id="KW-0804">Transcription</keyword>
<keyword id="KW-0808">Transferase</keyword>
<name>RPOZ_LACCB</name>
<proteinExistence type="inferred from homology"/>
<evidence type="ECO:0000255" key="1">
    <source>
        <dbReference type="HAMAP-Rule" id="MF_00366"/>
    </source>
</evidence>